<evidence type="ECO:0000250" key="1">
    <source>
        <dbReference type="UniProtKB" id="A0A0D4WTV1"/>
    </source>
</evidence>
<evidence type="ECO:0000250" key="2">
    <source>
        <dbReference type="UniProtKB" id="A0A0D4WV12"/>
    </source>
</evidence>
<evidence type="ECO:0000250" key="3">
    <source>
        <dbReference type="UniProtKB" id="P0CE80"/>
    </source>
</evidence>
<evidence type="ECO:0000250" key="4">
    <source>
        <dbReference type="UniProtKB" id="Q4ZFU2"/>
    </source>
</evidence>
<evidence type="ECO:0000250" key="5">
    <source>
        <dbReference type="UniProtKB" id="Q8I914"/>
    </source>
</evidence>
<evidence type="ECO:0000255" key="6"/>
<evidence type="ECO:0000269" key="7">
    <source>
    </source>
</evidence>
<evidence type="ECO:0000303" key="8">
    <source>
    </source>
</evidence>
<evidence type="ECO:0000305" key="9"/>
<evidence type="ECO:0000305" key="10">
    <source>
    </source>
</evidence>
<sequence>MLFPTALIFGCWALVIEGADNRRPIWNMGHMVNEVYQIDEFVDLGANSIETDITFDDDAMAEYSYHGVPCDCRRWCHKWEYVNVFLDGLRRATTPGDSKYRPELTLVVFDLKTGDLSSSTAYKGGKLFAQKLLDRYWNGGNNGGRAYIIISIPDIDHYAFITGFREALKNANHEELLDKVGYDFSGNDDLSSTRTALNKAGVKDREHVWQSDGITNCILRGLDRVREAVRNRDSSNGYINKVYYWTIEKYVSVRDALDAGVDGIMTNEPDVIVNVLNEGNYRGRFRLANYDDNPWVTFK</sequence>
<reference key="1">
    <citation type="journal article" date="2013" name="J. Cell. Biochem.">
        <title>Brown spider phospholipase-D containing a conservative mutation (D233E) in the catalytic site: identification and functional characterization.</title>
        <authorList>
            <person name="Vuitika L."/>
            <person name="Gremski L.H."/>
            <person name="Belisario-Ferrari M.R."/>
            <person name="Chaves-Moreira D."/>
            <person name="Ferrer V.P."/>
            <person name="Senff-Ribeiro A."/>
            <person name="Chaim O.M."/>
            <person name="Veiga S.S."/>
        </authorList>
    </citation>
    <scope>NUCLEOTIDE SEQUENCE [MRNA]</scope>
    <scope>FUNCTION</scope>
    <scope>3D-STRUCTURE MODELING</scope>
    <scope>CATALYTIC ACTIVITY</scope>
    <source>
        <tissue>Venom gland</tissue>
    </source>
</reference>
<protein>
    <recommendedName>
        <fullName>Dermonecrotic toxin LiSicTox-alphaIVA1</fullName>
        <ecNumber evidence="4">4.6.1.-</ecNumber>
    </recommendedName>
    <alternativeName>
        <fullName>Dermonecrotic toxin 7</fullName>
        <shortName>DT7</shortName>
    </alternativeName>
    <alternativeName>
        <fullName evidence="8">LiRecDT7</fullName>
    </alternativeName>
    <alternativeName>
        <fullName>Phospholipase D</fullName>
        <shortName>PLD</shortName>
    </alternativeName>
    <alternativeName>
        <fullName>Sphingomyelin phosphodiesterase D 7</fullName>
        <shortName>SMD 7</shortName>
        <shortName>SMase D 7</shortName>
        <shortName>Sphingomyelinase D 7</shortName>
    </alternativeName>
</protein>
<feature type="signal peptide" evidence="6">
    <location>
        <begin position="1"/>
        <end position="18"/>
    </location>
</feature>
<feature type="chain" id="PRO_0000423635" description="Dermonecrotic toxin LiSicTox-alphaIVA1">
    <location>
        <begin position="19"/>
        <end position="299"/>
    </location>
</feature>
<feature type="active site" evidence="5">
    <location>
        <position position="30"/>
    </location>
</feature>
<feature type="active site" description="Nucleophile" evidence="5">
    <location>
        <position position="66"/>
    </location>
</feature>
<feature type="binding site" evidence="5">
    <location>
        <position position="50"/>
    </location>
    <ligand>
        <name>Mg(2+)</name>
        <dbReference type="ChEBI" id="CHEBI:18420"/>
    </ligand>
</feature>
<feature type="binding site" evidence="5">
    <location>
        <position position="52"/>
    </location>
    <ligand>
        <name>Mg(2+)</name>
        <dbReference type="ChEBI" id="CHEBI:18420"/>
    </ligand>
</feature>
<feature type="binding site" evidence="5">
    <location>
        <position position="110"/>
    </location>
    <ligand>
        <name>Mg(2+)</name>
        <dbReference type="ChEBI" id="CHEBI:18420"/>
    </ligand>
</feature>
<feature type="disulfide bond" evidence="3">
    <location>
        <begin position="70"/>
        <end position="76"/>
    </location>
</feature>
<feature type="disulfide bond" evidence="3">
    <location>
        <begin position="72"/>
        <end position="217"/>
    </location>
</feature>
<dbReference type="EC" id="4.6.1.-" evidence="4"/>
<dbReference type="EMBL" id="KC237286">
    <property type="protein sequence ID" value="AGN52903.1"/>
    <property type="molecule type" value="mRNA"/>
</dbReference>
<dbReference type="SMR" id="P0DM60"/>
<dbReference type="GO" id="GO:0005576">
    <property type="term" value="C:extracellular region"/>
    <property type="evidence" value="ECO:0007669"/>
    <property type="project" value="UniProtKB-SubCell"/>
</dbReference>
<dbReference type="GO" id="GO:0016829">
    <property type="term" value="F:lyase activity"/>
    <property type="evidence" value="ECO:0007669"/>
    <property type="project" value="UniProtKB-KW"/>
</dbReference>
<dbReference type="GO" id="GO:0046872">
    <property type="term" value="F:metal ion binding"/>
    <property type="evidence" value="ECO:0007669"/>
    <property type="project" value="UniProtKB-KW"/>
</dbReference>
<dbReference type="GO" id="GO:0008081">
    <property type="term" value="F:phosphoric diester hydrolase activity"/>
    <property type="evidence" value="ECO:0007669"/>
    <property type="project" value="InterPro"/>
</dbReference>
<dbReference type="GO" id="GO:0090729">
    <property type="term" value="F:toxin activity"/>
    <property type="evidence" value="ECO:0007669"/>
    <property type="project" value="UniProtKB-KW"/>
</dbReference>
<dbReference type="GO" id="GO:0031640">
    <property type="term" value="P:killing of cells of another organism"/>
    <property type="evidence" value="ECO:0007669"/>
    <property type="project" value="UniProtKB-KW"/>
</dbReference>
<dbReference type="GO" id="GO:0016042">
    <property type="term" value="P:lipid catabolic process"/>
    <property type="evidence" value="ECO:0007669"/>
    <property type="project" value="UniProtKB-KW"/>
</dbReference>
<dbReference type="CDD" id="cd08576">
    <property type="entry name" value="GDPD_like_SMaseD_PLD"/>
    <property type="match status" value="1"/>
</dbReference>
<dbReference type="Gene3D" id="3.20.20.190">
    <property type="entry name" value="Phosphatidylinositol (PI) phosphodiesterase"/>
    <property type="match status" value="1"/>
</dbReference>
<dbReference type="InterPro" id="IPR017946">
    <property type="entry name" value="PLC-like_Pdiesterase_TIM-brl"/>
</dbReference>
<dbReference type="SUPFAM" id="SSF51695">
    <property type="entry name" value="PLC-like phosphodiesterases"/>
    <property type="match status" value="1"/>
</dbReference>
<keyword id="KW-0204">Cytolysis</keyword>
<keyword id="KW-1061">Dermonecrotic toxin</keyword>
<keyword id="KW-1015">Disulfide bond</keyword>
<keyword id="KW-0354">Hemolysis</keyword>
<keyword id="KW-1200">Hemorrhagic toxin</keyword>
<keyword id="KW-1199">Hemostasis impairing toxin</keyword>
<keyword id="KW-0442">Lipid degradation</keyword>
<keyword id="KW-0443">Lipid metabolism</keyword>
<keyword id="KW-0456">Lyase</keyword>
<keyword id="KW-0460">Magnesium</keyword>
<keyword id="KW-0479">Metal-binding</keyword>
<keyword id="KW-0964">Secreted</keyword>
<keyword id="KW-0732">Signal</keyword>
<keyword id="KW-0800">Toxin</keyword>
<keyword id="KW-0865">Zymogen</keyword>
<comment type="function">
    <text evidence="1 3 7">Dermonecrotic toxins cleave the phosphodiester linkage between the phosphate and headgroup of certain phospholipids (sphingolipid and lysolipid substrates), forming an alcohol (often choline) and a cyclic phosphate (By similarity). This toxin acts on sphingomyelin (SM) with high activity (PubMed:23733617). It may also act on ceramide phosphoethanolamine (CPE), lysophosphatidylcholine (LPC) and lysophosphatidylethanolamine (LPE), but not on lysophosphatidylserine (LPS), and lysophosphatidylglycerol (LPG) (By similarity). It acts by transphosphatidylation, releasing exclusively cyclic phosphate products as second products (By similarity). Has hemolytic activity in human erythrocytes in a dose-dependent manner (PubMed:23733617). In vivo, this toxin induces dermonecrosis, edema, hemorrhage, massive inflammatory response, as well as vascular permeability (PubMed:23733617). In addition, thrombus formation has also been detected in dermal blood vessels (PubMed:23733617). It also induces platelet aggregation (By similarity). It is noteworthy that a Glu-248 replaces the Asp present in paralogs, without decrease in catalytic and hemolytic activities (PubMed:23733617).</text>
</comment>
<comment type="catalytic activity">
    <reaction evidence="10">
        <text>an N-(acyl)-sphingosylphosphocholine = an N-(acyl)-sphingosyl-1,3-cyclic phosphate + choline</text>
        <dbReference type="Rhea" id="RHEA:60652"/>
        <dbReference type="ChEBI" id="CHEBI:15354"/>
        <dbReference type="ChEBI" id="CHEBI:64583"/>
        <dbReference type="ChEBI" id="CHEBI:143892"/>
    </reaction>
</comment>
<comment type="catalytic activity">
    <reaction evidence="1">
        <text>an N-(acyl)-sphingosylphosphoethanolamine = an N-(acyl)-sphingosyl-1,3-cyclic phosphate + ethanolamine</text>
        <dbReference type="Rhea" id="RHEA:60648"/>
        <dbReference type="ChEBI" id="CHEBI:57603"/>
        <dbReference type="ChEBI" id="CHEBI:143891"/>
        <dbReference type="ChEBI" id="CHEBI:143892"/>
    </reaction>
</comment>
<comment type="catalytic activity">
    <reaction evidence="1">
        <text>a 1-acyl-sn-glycero-3-phosphocholine = a 1-acyl-sn-glycero-2,3-cyclic phosphate + choline</text>
        <dbReference type="Rhea" id="RHEA:60700"/>
        <dbReference type="ChEBI" id="CHEBI:15354"/>
        <dbReference type="ChEBI" id="CHEBI:58168"/>
        <dbReference type="ChEBI" id="CHEBI:143947"/>
    </reaction>
</comment>
<comment type="catalytic activity">
    <reaction evidence="1">
        <text>a 1-acyl-sn-glycero-3-phosphoethanolamine = a 1-acyl-sn-glycero-2,3-cyclic phosphate + ethanolamine</text>
        <dbReference type="Rhea" id="RHEA:60704"/>
        <dbReference type="ChEBI" id="CHEBI:57603"/>
        <dbReference type="ChEBI" id="CHEBI:64381"/>
        <dbReference type="ChEBI" id="CHEBI:143947"/>
    </reaction>
</comment>
<comment type="cofactor">
    <cofactor evidence="5">
        <name>Mg(2+)</name>
        <dbReference type="ChEBI" id="CHEBI:18420"/>
    </cofactor>
    <text evidence="5">Binds 1 Mg(2+) ion per subunit.</text>
</comment>
<comment type="subcellular location">
    <subcellularLocation>
        <location evidence="10">Secreted</location>
    </subcellularLocation>
</comment>
<comment type="tissue specificity">
    <text evidence="10">Expressed by the venom gland.</text>
</comment>
<comment type="similarity">
    <text evidence="9">Belongs to the arthropod phospholipase D family. Class II subfamily. Class IIa sub-subfamily.</text>
</comment>
<comment type="caution">
    <text evidence="1 2 4">The most common activity assay for dermonecrotic toxins detects enzymatic activity by monitoring choline release from substrate. Liberation of choline from sphingomyelin (SM) or lysophosphatidylcholine (LPC) is commonly assumed to result from substrate hydrolysis, giving either ceramide-1-phosphate (C1P) or lysophosphatidic acid (LPA), respectively, as a second product. However, two studies from Lajoie and colleagues (2013 and 2015) report the observation of exclusive formation of cyclic phosphate products as second products, resulting from intramolecular transphosphatidylation. Cyclic phosphates have vastly different biological properties from their monoester counterparts, and they may be relevant to the pathology of brown spider envenomation.</text>
</comment>
<accession>P0DM60</accession>
<accession>R9UDZ9</accession>
<proteinExistence type="evidence at protein level"/>
<organism>
    <name type="scientific">Loxosceles intermedia</name>
    <name type="common">Brown spider</name>
    <dbReference type="NCBI Taxonomy" id="58218"/>
    <lineage>
        <taxon>Eukaryota</taxon>
        <taxon>Metazoa</taxon>
        <taxon>Ecdysozoa</taxon>
        <taxon>Arthropoda</taxon>
        <taxon>Chelicerata</taxon>
        <taxon>Arachnida</taxon>
        <taxon>Araneae</taxon>
        <taxon>Araneomorphae</taxon>
        <taxon>Haplogynae</taxon>
        <taxon>Scytodoidea</taxon>
        <taxon>Sicariidae</taxon>
        <taxon>Loxosceles</taxon>
    </lineage>
</organism>
<name>A4A1_LOXIN</name>